<gene>
    <name evidence="1" type="primary">trpS</name>
    <name type="ordered locus">STM3481</name>
</gene>
<name>SYW_SALTY</name>
<accession>P0A2P2</accession>
<accession>Q8XGS1</accession>
<keyword id="KW-0030">Aminoacyl-tRNA synthetase</keyword>
<keyword id="KW-0067">ATP-binding</keyword>
<keyword id="KW-0963">Cytoplasm</keyword>
<keyword id="KW-0436">Ligase</keyword>
<keyword id="KW-0547">Nucleotide-binding</keyword>
<keyword id="KW-0648">Protein biosynthesis</keyword>
<keyword id="KW-1185">Reference proteome</keyword>
<dbReference type="EC" id="6.1.1.2" evidence="1"/>
<dbReference type="EMBL" id="AE006468">
    <property type="protein sequence ID" value="AAL22343.1"/>
    <property type="molecule type" value="Genomic_DNA"/>
</dbReference>
<dbReference type="RefSeq" id="NP_462384.1">
    <property type="nucleotide sequence ID" value="NC_003197.2"/>
</dbReference>
<dbReference type="RefSeq" id="WP_000165562.1">
    <property type="nucleotide sequence ID" value="NC_003197.2"/>
</dbReference>
<dbReference type="SMR" id="P0A2P2"/>
<dbReference type="STRING" id="99287.STM3481"/>
<dbReference type="PaxDb" id="99287-STM3481"/>
<dbReference type="GeneID" id="1255004"/>
<dbReference type="KEGG" id="stm:STM3481"/>
<dbReference type="PATRIC" id="fig|99287.12.peg.3679"/>
<dbReference type="HOGENOM" id="CLU_029244_1_1_6"/>
<dbReference type="OMA" id="GWGQFKP"/>
<dbReference type="PhylomeDB" id="P0A2P2"/>
<dbReference type="BioCyc" id="SENT99287:STM3481-MONOMER"/>
<dbReference type="Proteomes" id="UP000001014">
    <property type="component" value="Chromosome"/>
</dbReference>
<dbReference type="GO" id="GO:0005829">
    <property type="term" value="C:cytosol"/>
    <property type="evidence" value="ECO:0000318"/>
    <property type="project" value="GO_Central"/>
</dbReference>
<dbReference type="GO" id="GO:0005524">
    <property type="term" value="F:ATP binding"/>
    <property type="evidence" value="ECO:0007669"/>
    <property type="project" value="UniProtKB-UniRule"/>
</dbReference>
<dbReference type="GO" id="GO:0004830">
    <property type="term" value="F:tryptophan-tRNA ligase activity"/>
    <property type="evidence" value="ECO:0000318"/>
    <property type="project" value="GO_Central"/>
</dbReference>
<dbReference type="GO" id="GO:0006436">
    <property type="term" value="P:tryptophanyl-tRNA aminoacylation"/>
    <property type="evidence" value="ECO:0000318"/>
    <property type="project" value="GO_Central"/>
</dbReference>
<dbReference type="CDD" id="cd00806">
    <property type="entry name" value="TrpRS_core"/>
    <property type="match status" value="1"/>
</dbReference>
<dbReference type="FunFam" id="1.10.240.10:FF:000002">
    <property type="entry name" value="Tryptophan--tRNA ligase"/>
    <property type="match status" value="1"/>
</dbReference>
<dbReference type="FunFam" id="3.40.50.620:FF:000024">
    <property type="entry name" value="Tryptophan--tRNA ligase"/>
    <property type="match status" value="1"/>
</dbReference>
<dbReference type="Gene3D" id="3.40.50.620">
    <property type="entry name" value="HUPs"/>
    <property type="match status" value="1"/>
</dbReference>
<dbReference type="Gene3D" id="1.10.240.10">
    <property type="entry name" value="Tyrosyl-Transfer RNA Synthetase"/>
    <property type="match status" value="1"/>
</dbReference>
<dbReference type="HAMAP" id="MF_00140_B">
    <property type="entry name" value="Trp_tRNA_synth_B"/>
    <property type="match status" value="1"/>
</dbReference>
<dbReference type="InterPro" id="IPR001412">
    <property type="entry name" value="aa-tRNA-synth_I_CS"/>
</dbReference>
<dbReference type="InterPro" id="IPR002305">
    <property type="entry name" value="aa-tRNA-synth_Ic"/>
</dbReference>
<dbReference type="InterPro" id="IPR014729">
    <property type="entry name" value="Rossmann-like_a/b/a_fold"/>
</dbReference>
<dbReference type="InterPro" id="IPR002306">
    <property type="entry name" value="Trp-tRNA-ligase"/>
</dbReference>
<dbReference type="InterPro" id="IPR024109">
    <property type="entry name" value="Trp-tRNA-ligase_bac-type"/>
</dbReference>
<dbReference type="InterPro" id="IPR050203">
    <property type="entry name" value="Trp-tRNA_synthetase"/>
</dbReference>
<dbReference type="NCBIfam" id="TIGR00233">
    <property type="entry name" value="trpS"/>
    <property type="match status" value="1"/>
</dbReference>
<dbReference type="PANTHER" id="PTHR43766">
    <property type="entry name" value="TRYPTOPHAN--TRNA LIGASE, MITOCHONDRIAL"/>
    <property type="match status" value="1"/>
</dbReference>
<dbReference type="PANTHER" id="PTHR43766:SF1">
    <property type="entry name" value="TRYPTOPHAN--TRNA LIGASE, MITOCHONDRIAL"/>
    <property type="match status" value="1"/>
</dbReference>
<dbReference type="Pfam" id="PF00579">
    <property type="entry name" value="tRNA-synt_1b"/>
    <property type="match status" value="1"/>
</dbReference>
<dbReference type="PRINTS" id="PR01039">
    <property type="entry name" value="TRNASYNTHTRP"/>
</dbReference>
<dbReference type="SUPFAM" id="SSF52374">
    <property type="entry name" value="Nucleotidylyl transferase"/>
    <property type="match status" value="1"/>
</dbReference>
<dbReference type="PROSITE" id="PS00178">
    <property type="entry name" value="AA_TRNA_LIGASE_I"/>
    <property type="match status" value="1"/>
</dbReference>
<protein>
    <recommendedName>
        <fullName evidence="1">Tryptophan--tRNA ligase</fullName>
        <ecNumber evidence="1">6.1.1.2</ecNumber>
    </recommendedName>
    <alternativeName>
        <fullName evidence="1">Tryptophanyl-tRNA synthetase</fullName>
        <shortName evidence="1">TrpRS</shortName>
    </alternativeName>
</protein>
<organism>
    <name type="scientific">Salmonella typhimurium (strain LT2 / SGSC1412 / ATCC 700720)</name>
    <dbReference type="NCBI Taxonomy" id="99287"/>
    <lineage>
        <taxon>Bacteria</taxon>
        <taxon>Pseudomonadati</taxon>
        <taxon>Pseudomonadota</taxon>
        <taxon>Gammaproteobacteria</taxon>
        <taxon>Enterobacterales</taxon>
        <taxon>Enterobacteriaceae</taxon>
        <taxon>Salmonella</taxon>
    </lineage>
</organism>
<comment type="function">
    <text evidence="1">Catalyzes the attachment of tryptophan to tRNA(Trp).</text>
</comment>
<comment type="catalytic activity">
    <reaction evidence="1">
        <text>tRNA(Trp) + L-tryptophan + ATP = L-tryptophyl-tRNA(Trp) + AMP + diphosphate + H(+)</text>
        <dbReference type="Rhea" id="RHEA:24080"/>
        <dbReference type="Rhea" id="RHEA-COMP:9671"/>
        <dbReference type="Rhea" id="RHEA-COMP:9705"/>
        <dbReference type="ChEBI" id="CHEBI:15378"/>
        <dbReference type="ChEBI" id="CHEBI:30616"/>
        <dbReference type="ChEBI" id="CHEBI:33019"/>
        <dbReference type="ChEBI" id="CHEBI:57912"/>
        <dbReference type="ChEBI" id="CHEBI:78442"/>
        <dbReference type="ChEBI" id="CHEBI:78535"/>
        <dbReference type="ChEBI" id="CHEBI:456215"/>
        <dbReference type="EC" id="6.1.1.2"/>
    </reaction>
</comment>
<comment type="subunit">
    <text evidence="1">Homodimer.</text>
</comment>
<comment type="subcellular location">
    <subcellularLocation>
        <location evidence="1">Cytoplasm</location>
    </subcellularLocation>
</comment>
<comment type="similarity">
    <text evidence="1">Belongs to the class-I aminoacyl-tRNA synthetase family.</text>
</comment>
<sequence length="334" mass="37401">MTKPIVFSGAQPSGELTIGNYMGALRQWVNMQDDYHCIYCIVDQHAITVRQDAQQLRKATLDTLALYLACGIDPEKSTIFVQSHVPEHAQLGWALNCYTYFGELSRMTQFKDKSARYAENINAGLFDYPVLMAADILLYQTNLVPVGEDQKQHLELSRDIAQRFNGLYGDIFKVPEPFIPKSGARVMSLLEPTKKMSKSDDNRNNVIGLLEDPKSVVKKIKRAVTDSDEPPVVRYDVKEKAGVSNLLDILSAVTGQSIPELEKQFEGKMYGHLKGEVAEAVSGMLSELQERYHRFRNDEAFLQKVMKDGAEKASARAAETLKAVYEAIGFVAKP</sequence>
<feature type="chain" id="PRO_0000136672" description="Tryptophan--tRNA ligase">
    <location>
        <begin position="1"/>
        <end position="334"/>
    </location>
</feature>
<feature type="short sequence motif" description="'HIGH' region" evidence="1">
    <location>
        <begin position="12"/>
        <end position="20"/>
    </location>
</feature>
<feature type="short sequence motif" description="'KMSKS' region" evidence="1">
    <location>
        <begin position="195"/>
        <end position="199"/>
    </location>
</feature>
<feature type="binding site" evidence="1">
    <location>
        <begin position="11"/>
        <end position="13"/>
    </location>
    <ligand>
        <name>ATP</name>
        <dbReference type="ChEBI" id="CHEBI:30616"/>
    </ligand>
</feature>
<feature type="binding site" evidence="1">
    <location>
        <begin position="19"/>
        <end position="20"/>
    </location>
    <ligand>
        <name>ATP</name>
        <dbReference type="ChEBI" id="CHEBI:30616"/>
    </ligand>
</feature>
<feature type="binding site" evidence="1">
    <location>
        <position position="135"/>
    </location>
    <ligand>
        <name>L-tryptophan</name>
        <dbReference type="ChEBI" id="CHEBI:57912"/>
    </ligand>
</feature>
<feature type="binding site" evidence="1">
    <location>
        <begin position="147"/>
        <end position="149"/>
    </location>
    <ligand>
        <name>ATP</name>
        <dbReference type="ChEBI" id="CHEBI:30616"/>
    </ligand>
</feature>
<feature type="binding site" evidence="1">
    <location>
        <position position="186"/>
    </location>
    <ligand>
        <name>ATP</name>
        <dbReference type="ChEBI" id="CHEBI:30616"/>
    </ligand>
</feature>
<feature type="binding site" evidence="1">
    <location>
        <begin position="195"/>
        <end position="199"/>
    </location>
    <ligand>
        <name>ATP</name>
        <dbReference type="ChEBI" id="CHEBI:30616"/>
    </ligand>
</feature>
<evidence type="ECO:0000255" key="1">
    <source>
        <dbReference type="HAMAP-Rule" id="MF_00140"/>
    </source>
</evidence>
<proteinExistence type="inferred from homology"/>
<reference key="1">
    <citation type="journal article" date="2001" name="Nature">
        <title>Complete genome sequence of Salmonella enterica serovar Typhimurium LT2.</title>
        <authorList>
            <person name="McClelland M."/>
            <person name="Sanderson K.E."/>
            <person name="Spieth J."/>
            <person name="Clifton S.W."/>
            <person name="Latreille P."/>
            <person name="Courtney L."/>
            <person name="Porwollik S."/>
            <person name="Ali J."/>
            <person name="Dante M."/>
            <person name="Du F."/>
            <person name="Hou S."/>
            <person name="Layman D."/>
            <person name="Leonard S."/>
            <person name="Nguyen C."/>
            <person name="Scott K."/>
            <person name="Holmes A."/>
            <person name="Grewal N."/>
            <person name="Mulvaney E."/>
            <person name="Ryan E."/>
            <person name="Sun H."/>
            <person name="Florea L."/>
            <person name="Miller W."/>
            <person name="Stoneking T."/>
            <person name="Nhan M."/>
            <person name="Waterston R."/>
            <person name="Wilson R.K."/>
        </authorList>
    </citation>
    <scope>NUCLEOTIDE SEQUENCE [LARGE SCALE GENOMIC DNA]</scope>
    <source>
        <strain>LT2 / SGSC1412 / ATCC 700720</strain>
    </source>
</reference>